<gene>
    <name type="primary">MPG1</name>
    <name type="synonym">PSA1</name>
    <name type="ordered locus">CNC03020</name>
</gene>
<organism>
    <name type="scientific">Cryptococcus neoformans var. neoformans serotype D (strain JEC21 / ATCC MYA-565)</name>
    <name type="common">Filobasidiella neoformans</name>
    <dbReference type="NCBI Taxonomy" id="214684"/>
    <lineage>
        <taxon>Eukaryota</taxon>
        <taxon>Fungi</taxon>
        <taxon>Dikarya</taxon>
        <taxon>Basidiomycota</taxon>
        <taxon>Agaricomycotina</taxon>
        <taxon>Tremellomycetes</taxon>
        <taxon>Tremellales</taxon>
        <taxon>Cryptococcaceae</taxon>
        <taxon>Cryptococcus</taxon>
        <taxon>Cryptococcus neoformans species complex</taxon>
    </lineage>
</organism>
<comment type="function">
    <text evidence="1">Involved in cell wall synthesis where it is required for glycosylation. Involved in cell cycle progression through cell-size checkpoint (By similarity).</text>
</comment>
<comment type="catalytic activity">
    <reaction>
        <text>alpha-D-mannose 1-phosphate + GTP + H(+) = GDP-alpha-D-mannose + diphosphate</text>
        <dbReference type="Rhea" id="RHEA:15229"/>
        <dbReference type="ChEBI" id="CHEBI:15378"/>
        <dbReference type="ChEBI" id="CHEBI:33019"/>
        <dbReference type="ChEBI" id="CHEBI:37565"/>
        <dbReference type="ChEBI" id="CHEBI:57527"/>
        <dbReference type="ChEBI" id="CHEBI:58409"/>
        <dbReference type="EC" id="2.7.7.13"/>
    </reaction>
</comment>
<comment type="pathway">
    <text>Nucleotide-sugar biosynthesis; GDP-alpha-D-mannose biosynthesis; GDP-alpha-D-mannose from alpha-D-mannose 1-phosphate (GTP route): step 1/1.</text>
</comment>
<comment type="subcellular location">
    <subcellularLocation>
        <location evidence="1">Cytoplasm</location>
    </subcellularLocation>
</comment>
<comment type="similarity">
    <text evidence="2">Belongs to the transferase hexapeptide repeat family.</text>
</comment>
<evidence type="ECO:0000250" key="1"/>
<evidence type="ECO:0000305" key="2"/>
<sequence length="364" mass="40063">MKALILVGGFGTRLRPLTLSWPKPLVEFCNKAMILHQIEALVKAGVKDIVLAVNYRPEVMVSVLKKTEEEFGINIHFSVETEPLGTAGPLALAREILGKDDSPFFVLNSDVTCVYPFEAFRDFHIAHKCEGSIMVTKVAEPSAYGVVVTKPNSTVIDRFVEKPVEFVGNRINAGIYIFNPSVLDRIELRPTSIEKEIFPAIAADQQLHSFDLQGFWMDVGQPKDFLAGTCLYLSHLTSQHSPLLTDPSQNKWVYGGNVMVDPSAEIDPTAVIGPNVVIGPDAKIGPGVRLQRCVIMSNATVRDHSWIANSIVGWNSTVGRWTRVENITVLGDDVTIKDELYVNGASVLPHKSISTSITEPRIVM</sequence>
<protein>
    <recommendedName>
        <fullName>Mannose-1-phosphate guanyltransferase</fullName>
        <ecNumber>2.7.7.13</ecNumber>
    </recommendedName>
    <alternativeName>
        <fullName>GDP-mannose pyrophosphorylase</fullName>
    </alternativeName>
    <alternativeName>
        <fullName>GTP-mannose-1-phosphate guanylyltransferase</fullName>
    </alternativeName>
</protein>
<name>MPG1_CRYNJ</name>
<dbReference type="EC" id="2.7.7.13"/>
<dbReference type="EMBL" id="AY426181">
    <property type="protein sequence ID" value="AAR84601.1"/>
    <property type="molecule type" value="Genomic_DNA"/>
</dbReference>
<dbReference type="EMBL" id="AE017343">
    <property type="protein sequence ID" value="AAW42293.1"/>
    <property type="molecule type" value="Genomic_DNA"/>
</dbReference>
<dbReference type="EMBL" id="DQ116945">
    <property type="protein sequence ID" value="AAZ22401.1"/>
    <property type="molecule type" value="mRNA"/>
</dbReference>
<dbReference type="RefSeq" id="XP_569600.1">
    <property type="nucleotide sequence ID" value="XM_569600.1"/>
</dbReference>
<dbReference type="SMR" id="P0CO20"/>
<dbReference type="FunCoup" id="P0CO20">
    <property type="interactions" value="304"/>
</dbReference>
<dbReference type="STRING" id="214684.P0CO20"/>
<dbReference type="PaxDb" id="214684-P0CO20"/>
<dbReference type="EnsemblFungi" id="AAW42293">
    <property type="protein sequence ID" value="AAW42293"/>
    <property type="gene ID" value="CNC03020"/>
</dbReference>
<dbReference type="GeneID" id="3256248"/>
<dbReference type="KEGG" id="cne:CNC03020"/>
<dbReference type="VEuPathDB" id="FungiDB:CNC03020"/>
<dbReference type="eggNOG" id="KOG1322">
    <property type="taxonomic scope" value="Eukaryota"/>
</dbReference>
<dbReference type="HOGENOM" id="CLU_029499_0_0_1"/>
<dbReference type="InParanoid" id="P0CO20"/>
<dbReference type="OMA" id="GPNCWIC"/>
<dbReference type="OrthoDB" id="1733332at2759"/>
<dbReference type="UniPathway" id="UPA00126">
    <property type="reaction ID" value="UER00930"/>
</dbReference>
<dbReference type="Proteomes" id="UP000002149">
    <property type="component" value="Chromosome 3"/>
</dbReference>
<dbReference type="GO" id="GO:0005737">
    <property type="term" value="C:cytoplasm"/>
    <property type="evidence" value="ECO:0000318"/>
    <property type="project" value="GO_Central"/>
</dbReference>
<dbReference type="GO" id="GO:0005525">
    <property type="term" value="F:GTP binding"/>
    <property type="evidence" value="ECO:0007669"/>
    <property type="project" value="UniProtKB-KW"/>
</dbReference>
<dbReference type="GO" id="GO:0004475">
    <property type="term" value="F:mannose-1-phosphate guanylyltransferase (GTP) activity"/>
    <property type="evidence" value="ECO:0000318"/>
    <property type="project" value="GO_Central"/>
</dbReference>
<dbReference type="GO" id="GO:0000032">
    <property type="term" value="P:cell wall mannoprotein biosynthetic process"/>
    <property type="evidence" value="ECO:0007669"/>
    <property type="project" value="EnsemblFungi"/>
</dbReference>
<dbReference type="GO" id="GO:0009298">
    <property type="term" value="P:GDP-mannose biosynthetic process"/>
    <property type="evidence" value="ECO:0000318"/>
    <property type="project" value="GO_Central"/>
</dbReference>
<dbReference type="GO" id="GO:0006486">
    <property type="term" value="P:protein glycosylation"/>
    <property type="evidence" value="ECO:0000318"/>
    <property type="project" value="GO_Central"/>
</dbReference>
<dbReference type="CDD" id="cd05824">
    <property type="entry name" value="LbH_M1P_guanylylT_C"/>
    <property type="match status" value="1"/>
</dbReference>
<dbReference type="CDD" id="cd06425">
    <property type="entry name" value="M1P_guanylylT_B_like_N"/>
    <property type="match status" value="1"/>
</dbReference>
<dbReference type="FunFam" id="3.90.550.10:FF:000013">
    <property type="entry name" value="mannose-1-phosphate guanyltransferase beta"/>
    <property type="match status" value="1"/>
</dbReference>
<dbReference type="Gene3D" id="2.160.10.10">
    <property type="entry name" value="Hexapeptide repeat proteins"/>
    <property type="match status" value="1"/>
</dbReference>
<dbReference type="Gene3D" id="3.90.550.10">
    <property type="entry name" value="Spore Coat Polysaccharide Biosynthesis Protein SpsA, Chain A"/>
    <property type="match status" value="1"/>
</dbReference>
<dbReference type="InterPro" id="IPR056729">
    <property type="entry name" value="GMPPB_C"/>
</dbReference>
<dbReference type="InterPro" id="IPR045233">
    <property type="entry name" value="GMPPB_N"/>
</dbReference>
<dbReference type="InterPro" id="IPR018357">
    <property type="entry name" value="Hexapep_transf_CS"/>
</dbReference>
<dbReference type="InterPro" id="IPR050486">
    <property type="entry name" value="Mannose-1P_guanyltransferase"/>
</dbReference>
<dbReference type="InterPro" id="IPR005835">
    <property type="entry name" value="NTP_transferase_dom"/>
</dbReference>
<dbReference type="InterPro" id="IPR029044">
    <property type="entry name" value="Nucleotide-diphossugar_trans"/>
</dbReference>
<dbReference type="PANTHER" id="PTHR22572">
    <property type="entry name" value="SUGAR-1-PHOSPHATE GUANYL TRANSFERASE"/>
    <property type="match status" value="1"/>
</dbReference>
<dbReference type="Pfam" id="PF25087">
    <property type="entry name" value="GMPPB_C"/>
    <property type="match status" value="1"/>
</dbReference>
<dbReference type="Pfam" id="PF00483">
    <property type="entry name" value="NTP_transferase"/>
    <property type="match status" value="1"/>
</dbReference>
<dbReference type="SUPFAM" id="SSF53448">
    <property type="entry name" value="Nucleotide-diphospho-sugar transferases"/>
    <property type="match status" value="1"/>
</dbReference>
<dbReference type="PROSITE" id="PS00101">
    <property type="entry name" value="HEXAPEP_TRANSFERASES"/>
    <property type="match status" value="2"/>
</dbReference>
<keyword id="KW-0131">Cell cycle</keyword>
<keyword id="KW-0963">Cytoplasm</keyword>
<keyword id="KW-0342">GTP-binding</keyword>
<keyword id="KW-0547">Nucleotide-binding</keyword>
<keyword id="KW-0548">Nucleotidyltransferase</keyword>
<keyword id="KW-1185">Reference proteome</keyword>
<keyword id="KW-0808">Transferase</keyword>
<proteinExistence type="evidence at transcript level"/>
<reference key="1">
    <citation type="submission" date="2003-09" db="EMBL/GenBank/DDBJ databases">
        <title>PSA1 encodes a putative GDP-mannose pyrophosphorylase.</title>
        <authorList>
            <person name="Janbon G."/>
        </authorList>
    </citation>
    <scope>NUCLEOTIDE SEQUENCE [GENOMIC DNA]</scope>
</reference>
<reference key="2">
    <citation type="journal article" date="2005" name="Science">
        <title>The genome of the basidiomycetous yeast and human pathogen Cryptococcus neoformans.</title>
        <authorList>
            <person name="Loftus B.J."/>
            <person name="Fung E."/>
            <person name="Roncaglia P."/>
            <person name="Rowley D."/>
            <person name="Amedeo P."/>
            <person name="Bruno D."/>
            <person name="Vamathevan J."/>
            <person name="Miranda M."/>
            <person name="Anderson I.J."/>
            <person name="Fraser J.A."/>
            <person name="Allen J.E."/>
            <person name="Bosdet I.E."/>
            <person name="Brent M.R."/>
            <person name="Chiu R."/>
            <person name="Doering T.L."/>
            <person name="Donlin M.J."/>
            <person name="D'Souza C.A."/>
            <person name="Fox D.S."/>
            <person name="Grinberg V."/>
            <person name="Fu J."/>
            <person name="Fukushima M."/>
            <person name="Haas B.J."/>
            <person name="Huang J.C."/>
            <person name="Janbon G."/>
            <person name="Jones S.J.M."/>
            <person name="Koo H.L."/>
            <person name="Krzywinski M.I."/>
            <person name="Kwon-Chung K.J."/>
            <person name="Lengeler K.B."/>
            <person name="Maiti R."/>
            <person name="Marra M.A."/>
            <person name="Marra R.E."/>
            <person name="Mathewson C.A."/>
            <person name="Mitchell T.G."/>
            <person name="Pertea M."/>
            <person name="Riggs F.R."/>
            <person name="Salzberg S.L."/>
            <person name="Schein J.E."/>
            <person name="Shvartsbeyn A."/>
            <person name="Shin H."/>
            <person name="Shumway M."/>
            <person name="Specht C.A."/>
            <person name="Suh B.B."/>
            <person name="Tenney A."/>
            <person name="Utterback T.R."/>
            <person name="Wickes B.L."/>
            <person name="Wortman J.R."/>
            <person name="Wye N.H."/>
            <person name="Kronstad J.W."/>
            <person name="Lodge J.K."/>
            <person name="Heitman J."/>
            <person name="Davis R.W."/>
            <person name="Fraser C.M."/>
            <person name="Hyman R.W."/>
        </authorList>
    </citation>
    <scope>NUCLEOTIDE SEQUENCE [LARGE SCALE GENOMIC DNA]</scope>
    <source>
        <strain>JEC21 / ATCC MYA-565</strain>
    </source>
</reference>
<reference key="3">
    <citation type="submission" date="2005-07" db="EMBL/GenBank/DDBJ databases">
        <title>Cloning and characterization of SRB1/PSA1 homolog of Cryptococcus neoformans.</title>
        <authorList>
            <person name="Warit S."/>
            <person name="Palittapongarnpim P."/>
        </authorList>
    </citation>
    <scope>NUCLEOTIDE SEQUENCE [MRNA] OF 7-358</scope>
    <source>
        <strain>B4500</strain>
    </source>
</reference>
<feature type="chain" id="PRO_0000238486" description="Mannose-1-phosphate guanyltransferase">
    <location>
        <begin position="1"/>
        <end position="364"/>
    </location>
</feature>
<feature type="sequence conflict" description="In Ref. 1; AAR84601." evidence="2" ref="1">
    <original>MK</original>
    <variation>MPCPTRPYNEDKCAPTARSRRLTRSAPH</variation>
    <location>
        <begin position="1"/>
        <end position="2"/>
    </location>
</feature>
<accession>P0CO20</accession>
<accession>Q45T76</accession>
<accession>Q55VR7</accession>
<accession>Q5KKH2</accession>
<accession>Q5WQW2</accession>